<gene>
    <name evidence="1" type="primary">mtgA</name>
    <name type="ordered locus">SBO_3174</name>
</gene>
<keyword id="KW-0997">Cell inner membrane</keyword>
<keyword id="KW-1003">Cell membrane</keyword>
<keyword id="KW-0133">Cell shape</keyword>
<keyword id="KW-0961">Cell wall biogenesis/degradation</keyword>
<keyword id="KW-0328">Glycosyltransferase</keyword>
<keyword id="KW-0472">Membrane</keyword>
<keyword id="KW-0573">Peptidoglycan synthesis</keyword>
<keyword id="KW-0808">Transferase</keyword>
<keyword id="KW-0812">Transmembrane</keyword>
<keyword id="KW-1133">Transmembrane helix</keyword>
<accession>Q31W84</accession>
<organism>
    <name type="scientific">Shigella boydii serotype 4 (strain Sb227)</name>
    <dbReference type="NCBI Taxonomy" id="300268"/>
    <lineage>
        <taxon>Bacteria</taxon>
        <taxon>Pseudomonadati</taxon>
        <taxon>Pseudomonadota</taxon>
        <taxon>Gammaproteobacteria</taxon>
        <taxon>Enterobacterales</taxon>
        <taxon>Enterobacteriaceae</taxon>
        <taxon>Shigella</taxon>
    </lineage>
</organism>
<proteinExistence type="inferred from homology"/>
<protein>
    <recommendedName>
        <fullName evidence="1">Biosynthetic peptidoglycan transglycosylase</fullName>
        <ecNumber evidence="1">2.4.99.28</ecNumber>
    </recommendedName>
    <alternativeName>
        <fullName evidence="1">Glycan polymerase</fullName>
    </alternativeName>
    <alternativeName>
        <fullName evidence="1">Peptidoglycan glycosyltransferase MtgA</fullName>
        <shortName evidence="1">PGT</shortName>
    </alternativeName>
</protein>
<comment type="function">
    <text evidence="1">Peptidoglycan polymerase that catalyzes glycan chain elongation from lipid-linked precursors.</text>
</comment>
<comment type="catalytic activity">
    <reaction evidence="1">
        <text>[GlcNAc-(1-&gt;4)-Mur2Ac(oyl-L-Ala-gamma-D-Glu-L-Lys-D-Ala-D-Ala)](n)-di-trans,octa-cis-undecaprenyl diphosphate + beta-D-GlcNAc-(1-&gt;4)-Mur2Ac(oyl-L-Ala-gamma-D-Glu-L-Lys-D-Ala-D-Ala)-di-trans,octa-cis-undecaprenyl diphosphate = [GlcNAc-(1-&gt;4)-Mur2Ac(oyl-L-Ala-gamma-D-Glu-L-Lys-D-Ala-D-Ala)](n+1)-di-trans,octa-cis-undecaprenyl diphosphate + di-trans,octa-cis-undecaprenyl diphosphate + H(+)</text>
        <dbReference type="Rhea" id="RHEA:23708"/>
        <dbReference type="Rhea" id="RHEA-COMP:9602"/>
        <dbReference type="Rhea" id="RHEA-COMP:9603"/>
        <dbReference type="ChEBI" id="CHEBI:15378"/>
        <dbReference type="ChEBI" id="CHEBI:58405"/>
        <dbReference type="ChEBI" id="CHEBI:60033"/>
        <dbReference type="ChEBI" id="CHEBI:78435"/>
        <dbReference type="EC" id="2.4.99.28"/>
    </reaction>
</comment>
<comment type="pathway">
    <text evidence="1">Cell wall biogenesis; peptidoglycan biosynthesis.</text>
</comment>
<comment type="subcellular location">
    <subcellularLocation>
        <location evidence="1">Cell inner membrane</location>
        <topology evidence="1">Single-pass membrane protein</topology>
    </subcellularLocation>
</comment>
<comment type="similarity">
    <text evidence="1">Belongs to the glycosyltransferase 51 family.</text>
</comment>
<feature type="chain" id="PRO_0000257692" description="Biosynthetic peptidoglycan transglycosylase">
    <location>
        <begin position="1"/>
        <end position="242"/>
    </location>
</feature>
<feature type="transmembrane region" description="Helical" evidence="1">
    <location>
        <begin position="19"/>
        <end position="39"/>
    </location>
</feature>
<evidence type="ECO:0000255" key="1">
    <source>
        <dbReference type="HAMAP-Rule" id="MF_00766"/>
    </source>
</evidence>
<sequence>MSKSRLTVFSFVRRFLLRLMVVLAVFWAGGIALFSVAPVPFSAVMVERQVSAWLHGNFRYVAHSDWVSMDQISPWMGLAVIAAEDQKFPEHRGFDVASIEKALAHNERNENRIRGASTISQQTAKNLFLWDGRSWVRKGLEAGLTLGIETVWSKKRILTVYLNIAEFGDGVFGVEAAAQRYFHKPASKLTRSEAALLAAVLPNPLRFKVSSPSGYVRSRQAWILRQMYQLGGEPFMQQHQLD</sequence>
<reference key="1">
    <citation type="journal article" date="2005" name="Nucleic Acids Res.">
        <title>Genome dynamics and diversity of Shigella species, the etiologic agents of bacillary dysentery.</title>
        <authorList>
            <person name="Yang F."/>
            <person name="Yang J."/>
            <person name="Zhang X."/>
            <person name="Chen L."/>
            <person name="Jiang Y."/>
            <person name="Yan Y."/>
            <person name="Tang X."/>
            <person name="Wang J."/>
            <person name="Xiong Z."/>
            <person name="Dong J."/>
            <person name="Xue Y."/>
            <person name="Zhu Y."/>
            <person name="Xu X."/>
            <person name="Sun L."/>
            <person name="Chen S."/>
            <person name="Nie H."/>
            <person name="Peng J."/>
            <person name="Xu J."/>
            <person name="Wang Y."/>
            <person name="Yuan Z."/>
            <person name="Wen Y."/>
            <person name="Yao Z."/>
            <person name="Shen Y."/>
            <person name="Qiang B."/>
            <person name="Hou Y."/>
            <person name="Yu J."/>
            <person name="Jin Q."/>
        </authorList>
    </citation>
    <scope>NUCLEOTIDE SEQUENCE [LARGE SCALE GENOMIC DNA]</scope>
    <source>
        <strain>Sb227</strain>
    </source>
</reference>
<name>MTGA_SHIBS</name>
<dbReference type="EC" id="2.4.99.28" evidence="1"/>
<dbReference type="EMBL" id="CP000036">
    <property type="protein sequence ID" value="ABB67674.1"/>
    <property type="molecule type" value="Genomic_DNA"/>
</dbReference>
<dbReference type="RefSeq" id="WP_000047072.1">
    <property type="nucleotide sequence ID" value="NC_007613.1"/>
</dbReference>
<dbReference type="SMR" id="Q31W84"/>
<dbReference type="CAZy" id="GT51">
    <property type="family name" value="Glycosyltransferase Family 51"/>
</dbReference>
<dbReference type="KEGG" id="sbo:SBO_3174"/>
<dbReference type="HOGENOM" id="CLU_006354_1_1_6"/>
<dbReference type="UniPathway" id="UPA00219"/>
<dbReference type="Proteomes" id="UP000007067">
    <property type="component" value="Chromosome"/>
</dbReference>
<dbReference type="GO" id="GO:0009274">
    <property type="term" value="C:peptidoglycan-based cell wall"/>
    <property type="evidence" value="ECO:0007669"/>
    <property type="project" value="InterPro"/>
</dbReference>
<dbReference type="GO" id="GO:0005886">
    <property type="term" value="C:plasma membrane"/>
    <property type="evidence" value="ECO:0007669"/>
    <property type="project" value="UniProtKB-SubCell"/>
</dbReference>
<dbReference type="GO" id="GO:0016763">
    <property type="term" value="F:pentosyltransferase activity"/>
    <property type="evidence" value="ECO:0007669"/>
    <property type="project" value="InterPro"/>
</dbReference>
<dbReference type="GO" id="GO:0008955">
    <property type="term" value="F:peptidoglycan glycosyltransferase activity"/>
    <property type="evidence" value="ECO:0007669"/>
    <property type="project" value="UniProtKB-UniRule"/>
</dbReference>
<dbReference type="GO" id="GO:0071555">
    <property type="term" value="P:cell wall organization"/>
    <property type="evidence" value="ECO:0007669"/>
    <property type="project" value="UniProtKB-KW"/>
</dbReference>
<dbReference type="GO" id="GO:0009252">
    <property type="term" value="P:peptidoglycan biosynthetic process"/>
    <property type="evidence" value="ECO:0007669"/>
    <property type="project" value="UniProtKB-UniRule"/>
</dbReference>
<dbReference type="GO" id="GO:0008360">
    <property type="term" value="P:regulation of cell shape"/>
    <property type="evidence" value="ECO:0007669"/>
    <property type="project" value="UniProtKB-KW"/>
</dbReference>
<dbReference type="FunFam" id="1.10.3810.10:FF:000004">
    <property type="entry name" value="Biosynthetic peptidoglycan transglycosylase"/>
    <property type="match status" value="1"/>
</dbReference>
<dbReference type="Gene3D" id="1.10.3810.10">
    <property type="entry name" value="Biosynthetic peptidoglycan transglycosylase-like"/>
    <property type="match status" value="1"/>
</dbReference>
<dbReference type="HAMAP" id="MF_00766">
    <property type="entry name" value="PGT_MtgA"/>
    <property type="match status" value="1"/>
</dbReference>
<dbReference type="InterPro" id="IPR001264">
    <property type="entry name" value="Glyco_trans_51"/>
</dbReference>
<dbReference type="InterPro" id="IPR023346">
    <property type="entry name" value="Lysozyme-like_dom_sf"/>
</dbReference>
<dbReference type="InterPro" id="IPR036950">
    <property type="entry name" value="PBP_transglycosylase"/>
</dbReference>
<dbReference type="InterPro" id="IPR011812">
    <property type="entry name" value="Pep_trsgly"/>
</dbReference>
<dbReference type="NCBIfam" id="TIGR02070">
    <property type="entry name" value="mono_pep_trsgly"/>
    <property type="match status" value="1"/>
</dbReference>
<dbReference type="PANTHER" id="PTHR30400:SF0">
    <property type="entry name" value="BIOSYNTHETIC PEPTIDOGLYCAN TRANSGLYCOSYLASE"/>
    <property type="match status" value="1"/>
</dbReference>
<dbReference type="PANTHER" id="PTHR30400">
    <property type="entry name" value="MONOFUNCTIONAL BIOSYNTHETIC PEPTIDOGLYCAN TRANSGLYCOSYLASE"/>
    <property type="match status" value="1"/>
</dbReference>
<dbReference type="Pfam" id="PF00912">
    <property type="entry name" value="Transgly"/>
    <property type="match status" value="1"/>
</dbReference>
<dbReference type="SUPFAM" id="SSF53955">
    <property type="entry name" value="Lysozyme-like"/>
    <property type="match status" value="1"/>
</dbReference>